<name>JIP5_COCIM</name>
<proteinExistence type="inferred from homology"/>
<gene>
    <name type="primary">JIP5</name>
    <name type="ORF">CIMG_07998</name>
</gene>
<sequence length="416" mass="44563">MFDTVCSLPLSSDLFSQAIHPTEPLVSIGLSSGHVQTFHLPAPSENGKAGYGHIDTVWRTRRHKGSCRCVGFGIDGETLYSAGTDGWVKAARTETGRVEWKFAVPRIGDKSGFQVDSPCLIHALSPQTLLLATDSGALHLFDLRDRSTEVSARPQQTHHPHDDYVSSLTPLPPSETSTSGYSKQWITTGGTTIAVTDLRRGILVRSEDQGEELISSSYVTGLKAGGTSKGEKLVVGGASGVLTLWEKGAWDDQDERIIVDRSLDGGESLEVIANVPDELGKGKVVAVGQSDGRVQFVQLGPNKVISELSHDDLEGVVGLGFDVQGRMISGGGTVVKVWHEAISDEEGNDDESDEEDIENGEGLGKKRKGGNGSSDEEEDSDDDMAGKDKGKRKKRKRGKGKDRSGGVHVMAFKGLD</sequence>
<keyword id="KW-0539">Nucleus</keyword>
<keyword id="KW-1185">Reference proteome</keyword>
<keyword id="KW-0677">Repeat</keyword>
<keyword id="KW-0853">WD repeat</keyword>
<reference key="1">
    <citation type="journal article" date="2009" name="Genome Res.">
        <title>Comparative genomic analyses of the human fungal pathogens Coccidioides and their relatives.</title>
        <authorList>
            <person name="Sharpton T.J."/>
            <person name="Stajich J.E."/>
            <person name="Rounsley S.D."/>
            <person name="Gardner M.J."/>
            <person name="Wortman J.R."/>
            <person name="Jordar V.S."/>
            <person name="Maiti R."/>
            <person name="Kodira C.D."/>
            <person name="Neafsey D.E."/>
            <person name="Zeng Q."/>
            <person name="Hung C.-Y."/>
            <person name="McMahan C."/>
            <person name="Muszewska A."/>
            <person name="Grynberg M."/>
            <person name="Mandel M.A."/>
            <person name="Kellner E.M."/>
            <person name="Barker B.M."/>
            <person name="Galgiani J.N."/>
            <person name="Orbach M.J."/>
            <person name="Kirkland T.N."/>
            <person name="Cole G.T."/>
            <person name="Henn M.R."/>
            <person name="Birren B.W."/>
            <person name="Taylor J.W."/>
        </authorList>
    </citation>
    <scope>NUCLEOTIDE SEQUENCE [LARGE SCALE GENOMIC DNA]</scope>
    <source>
        <strain>RS</strain>
    </source>
</reference>
<reference key="2">
    <citation type="journal article" date="2010" name="Genome Res.">
        <title>Population genomic sequencing of Coccidioides fungi reveals recent hybridization and transposon control.</title>
        <authorList>
            <person name="Neafsey D.E."/>
            <person name="Barker B.M."/>
            <person name="Sharpton T.J."/>
            <person name="Stajich J.E."/>
            <person name="Park D.J."/>
            <person name="Whiston E."/>
            <person name="Hung C.-Y."/>
            <person name="McMahan C."/>
            <person name="White J."/>
            <person name="Sykes S."/>
            <person name="Heiman D."/>
            <person name="Young S."/>
            <person name="Zeng Q."/>
            <person name="Abouelleil A."/>
            <person name="Aftuck L."/>
            <person name="Bessette D."/>
            <person name="Brown A."/>
            <person name="FitzGerald M."/>
            <person name="Lui A."/>
            <person name="Macdonald J.P."/>
            <person name="Priest M."/>
            <person name="Orbach M.J."/>
            <person name="Galgiani J.N."/>
            <person name="Kirkland T.N."/>
            <person name="Cole G.T."/>
            <person name="Birren B.W."/>
            <person name="Henn M.R."/>
            <person name="Taylor J.W."/>
            <person name="Rounsley S.D."/>
        </authorList>
    </citation>
    <scope>GENOME REANNOTATION</scope>
    <source>
        <strain>RS</strain>
    </source>
</reference>
<accession>Q1DNW5</accession>
<accession>J3K5A0</accession>
<protein>
    <recommendedName>
        <fullName>WD repeat-containing protein JIP5</fullName>
    </recommendedName>
</protein>
<dbReference type="EMBL" id="GG704913">
    <property type="protein sequence ID" value="EAS29252.3"/>
    <property type="molecule type" value="Genomic_DNA"/>
</dbReference>
<dbReference type="RefSeq" id="XP_001240835.1">
    <property type="nucleotide sequence ID" value="XM_001240834.2"/>
</dbReference>
<dbReference type="SMR" id="Q1DNW5"/>
<dbReference type="FunCoup" id="Q1DNW5">
    <property type="interactions" value="104"/>
</dbReference>
<dbReference type="STRING" id="246410.Q1DNW5"/>
<dbReference type="GeneID" id="4559472"/>
<dbReference type="KEGG" id="cim:CIMG_07998"/>
<dbReference type="VEuPathDB" id="FungiDB:CIMG_07998"/>
<dbReference type="InParanoid" id="Q1DNW5"/>
<dbReference type="OMA" id="QAIHPTE"/>
<dbReference type="OrthoDB" id="2288928at2759"/>
<dbReference type="Proteomes" id="UP000001261">
    <property type="component" value="Unassembled WGS sequence"/>
</dbReference>
<dbReference type="GO" id="GO:0005730">
    <property type="term" value="C:nucleolus"/>
    <property type="evidence" value="ECO:0007669"/>
    <property type="project" value="UniProtKB-SubCell"/>
</dbReference>
<dbReference type="Gene3D" id="2.130.10.10">
    <property type="entry name" value="YVTN repeat-like/Quinoprotein amine dehydrogenase"/>
    <property type="match status" value="2"/>
</dbReference>
<dbReference type="InterPro" id="IPR015943">
    <property type="entry name" value="WD40/YVTN_repeat-like_dom_sf"/>
</dbReference>
<dbReference type="InterPro" id="IPR036322">
    <property type="entry name" value="WD40_repeat_dom_sf"/>
</dbReference>
<dbReference type="InterPro" id="IPR001680">
    <property type="entry name" value="WD40_rpt"/>
</dbReference>
<dbReference type="InterPro" id="IPR050505">
    <property type="entry name" value="WDR55_POC1"/>
</dbReference>
<dbReference type="PANTHER" id="PTHR44019">
    <property type="entry name" value="WD REPEAT-CONTAINING PROTEIN 55"/>
    <property type="match status" value="1"/>
</dbReference>
<dbReference type="PANTHER" id="PTHR44019:SF20">
    <property type="entry name" value="WD REPEAT-CONTAINING PROTEIN 55"/>
    <property type="match status" value="1"/>
</dbReference>
<dbReference type="SMART" id="SM00320">
    <property type="entry name" value="WD40"/>
    <property type="match status" value="4"/>
</dbReference>
<dbReference type="SUPFAM" id="SSF50978">
    <property type="entry name" value="WD40 repeat-like"/>
    <property type="match status" value="1"/>
</dbReference>
<comment type="subcellular location">
    <subcellularLocation>
        <location evidence="1">Nucleus</location>
        <location evidence="1">Nucleolus</location>
    </subcellularLocation>
</comment>
<comment type="similarity">
    <text evidence="3">Belongs to the WD repeat WDR55 family.</text>
</comment>
<feature type="chain" id="PRO_0000333555" description="WD repeat-containing protein JIP5">
    <location>
        <begin position="1"/>
        <end position="416"/>
    </location>
</feature>
<feature type="repeat" description="WD 1">
    <location>
        <begin position="9"/>
        <end position="48"/>
    </location>
</feature>
<feature type="repeat" description="WD 2">
    <location>
        <begin position="62"/>
        <end position="101"/>
    </location>
</feature>
<feature type="repeat" description="WD 3">
    <location>
        <begin position="112"/>
        <end position="151"/>
    </location>
</feature>
<feature type="repeat" description="WD 4">
    <location>
        <begin position="214"/>
        <end position="255"/>
    </location>
</feature>
<feature type="repeat" description="WD 5">
    <location>
        <begin position="264"/>
        <end position="308"/>
    </location>
</feature>
<feature type="repeat" description="WD 6">
    <location>
        <begin position="309"/>
        <end position="348"/>
    </location>
</feature>
<feature type="region of interest" description="Disordered" evidence="2">
    <location>
        <begin position="149"/>
        <end position="183"/>
    </location>
</feature>
<feature type="region of interest" description="Disordered" evidence="2">
    <location>
        <begin position="343"/>
        <end position="416"/>
    </location>
</feature>
<feature type="compositionally biased region" description="Low complexity" evidence="2">
    <location>
        <begin position="166"/>
        <end position="179"/>
    </location>
</feature>
<feature type="compositionally biased region" description="Acidic residues" evidence="2">
    <location>
        <begin position="343"/>
        <end position="359"/>
    </location>
</feature>
<feature type="compositionally biased region" description="Acidic residues" evidence="2">
    <location>
        <begin position="374"/>
        <end position="383"/>
    </location>
</feature>
<feature type="compositionally biased region" description="Basic residues" evidence="2">
    <location>
        <begin position="389"/>
        <end position="400"/>
    </location>
</feature>
<evidence type="ECO:0000250" key="1"/>
<evidence type="ECO:0000256" key="2">
    <source>
        <dbReference type="SAM" id="MobiDB-lite"/>
    </source>
</evidence>
<evidence type="ECO:0000305" key="3"/>
<organism>
    <name type="scientific">Coccidioides immitis (strain RS)</name>
    <name type="common">Valley fever fungus</name>
    <dbReference type="NCBI Taxonomy" id="246410"/>
    <lineage>
        <taxon>Eukaryota</taxon>
        <taxon>Fungi</taxon>
        <taxon>Dikarya</taxon>
        <taxon>Ascomycota</taxon>
        <taxon>Pezizomycotina</taxon>
        <taxon>Eurotiomycetes</taxon>
        <taxon>Eurotiomycetidae</taxon>
        <taxon>Onygenales</taxon>
        <taxon>Onygenaceae</taxon>
        <taxon>Coccidioides</taxon>
    </lineage>
</organism>